<sequence>MSSTAQKNSLSPTGNGVTKRKSGSAACVHCHRRKVRCDARIVGLPCSNCRSSGKTDCRIHEKKKRLAVRSILNPVPIRCRPPSTSEHVPEASPPSTISEPTAFTTAFRGVQPEAAAPPASVAPNVQSKAQHLHSNSYSQTSPQAQECHLPPASDRFAEQDAHADFEKRLVKLIDDEEGSGPREIQRGVRAIYVGHELSNMSFLIRQQRDKDDDVYHFAGSEIPRRQLKTGHDQLLVDALTLPEPALVDELVQAYFTHVNPGYPIVEEDQFMSQYRNRDPSDPPPILLLQAILLVGCHVTHPKEERDALKAIFFRRAKWLFDNRIERNRDTLVQAALLLTWHSDSPDDDVSANAHYWVGVAARIATGLGMHRNPVSSRFAPRDRRMWRRLWYILVQLDVMVSLSYGRPQAINLEDSDVSPLTASDFEGCGARVQTDYVIHFSELCTMISYIVRERFGLRVSSERRKAALQEADEALANWSLRLPDHLRLRASDMDPWSAMLHLTYNNFLILLHRPHPRASAYSDDYGPHDAEICSAAAGVITSIFEELRLNDRLKYLWYSGVHTLFTAMIQVRVELRFSNPVLAINALRRFDSASCSLRELAKYWSHATTILRLFEDSKRLQKDLRLATSERSRPFSSTQDQPQAQALDQNKNQHQHSSADAPVQPPQPDRLLPSYDSPTPDSTSLPQTAVSPHQNLTFDSWIPSTNLATVDPMDQPREFLDWRQLFSFTDPDQPVLPMSMDGLPELEDEWRQIYWQETPMSDLLQDGGWMHG</sequence>
<gene>
    <name type="primary">amdR</name>
    <name type="ORF">AFUA_1G03860</name>
</gene>
<proteinExistence type="inferred from homology"/>
<protein>
    <recommendedName>
        <fullName>Acetamidase regulatory protein</fullName>
    </recommendedName>
</protein>
<keyword id="KW-0238">DNA-binding</keyword>
<keyword id="KW-0479">Metal-binding</keyword>
<keyword id="KW-0539">Nucleus</keyword>
<keyword id="KW-1185">Reference proteome</keyword>
<keyword id="KW-0804">Transcription</keyword>
<keyword id="KW-0805">Transcription regulation</keyword>
<keyword id="KW-0862">Zinc</keyword>
<name>AMDR_ASPFU</name>
<accession>Q4WK35</accession>
<evidence type="ECO:0000250" key="1"/>
<evidence type="ECO:0000255" key="2">
    <source>
        <dbReference type="PROSITE-ProRule" id="PRU00227"/>
    </source>
</evidence>
<evidence type="ECO:0000256" key="3">
    <source>
        <dbReference type="SAM" id="MobiDB-lite"/>
    </source>
</evidence>
<feature type="chain" id="PRO_0000233115" description="Acetamidase regulatory protein">
    <location>
        <begin position="1"/>
        <end position="772"/>
    </location>
</feature>
<feature type="DNA-binding region" description="Zn(2)-C6 fungal-type" evidence="2">
    <location>
        <begin position="26"/>
        <end position="59"/>
    </location>
</feature>
<feature type="region of interest" description="Disordered" evidence="3">
    <location>
        <begin position="1"/>
        <end position="23"/>
    </location>
</feature>
<feature type="region of interest" description="Disordered" evidence="3">
    <location>
        <begin position="78"/>
        <end position="99"/>
    </location>
</feature>
<feature type="region of interest" description="Disordered" evidence="3">
    <location>
        <begin position="114"/>
        <end position="148"/>
    </location>
</feature>
<feature type="region of interest" description="Disordered" evidence="3">
    <location>
        <begin position="627"/>
        <end position="690"/>
    </location>
</feature>
<feature type="compositionally biased region" description="Polar residues" evidence="3">
    <location>
        <begin position="1"/>
        <end position="16"/>
    </location>
</feature>
<feature type="compositionally biased region" description="Low complexity" evidence="3">
    <location>
        <begin position="114"/>
        <end position="123"/>
    </location>
</feature>
<feature type="compositionally biased region" description="Polar residues" evidence="3">
    <location>
        <begin position="124"/>
        <end position="144"/>
    </location>
</feature>
<feature type="compositionally biased region" description="Polar residues" evidence="3">
    <location>
        <begin position="634"/>
        <end position="658"/>
    </location>
</feature>
<feature type="compositionally biased region" description="Low complexity" evidence="3">
    <location>
        <begin position="671"/>
        <end position="686"/>
    </location>
</feature>
<dbReference type="EMBL" id="AAHF01000007">
    <property type="protein sequence ID" value="EAL88097.1"/>
    <property type="molecule type" value="Genomic_DNA"/>
</dbReference>
<dbReference type="RefSeq" id="XP_750135.1">
    <property type="nucleotide sequence ID" value="XM_745042.1"/>
</dbReference>
<dbReference type="SMR" id="Q4WK35"/>
<dbReference type="STRING" id="330879.Q4WK35"/>
<dbReference type="EnsemblFungi" id="EAL88097">
    <property type="protein sequence ID" value="EAL88097"/>
    <property type="gene ID" value="AFUA_1G03860"/>
</dbReference>
<dbReference type="GeneID" id="3507372"/>
<dbReference type="KEGG" id="afm:AFUA_1G03860"/>
<dbReference type="VEuPathDB" id="FungiDB:Afu1g03860"/>
<dbReference type="HOGENOM" id="CLU_006329_4_0_1"/>
<dbReference type="InParanoid" id="Q4WK35"/>
<dbReference type="OMA" id="WRRLWYI"/>
<dbReference type="OrthoDB" id="4236860at2759"/>
<dbReference type="Proteomes" id="UP000002530">
    <property type="component" value="Chromosome 1"/>
</dbReference>
<dbReference type="GO" id="GO:0005634">
    <property type="term" value="C:nucleus"/>
    <property type="evidence" value="ECO:0007669"/>
    <property type="project" value="UniProtKB-SubCell"/>
</dbReference>
<dbReference type="GO" id="GO:0003677">
    <property type="term" value="F:DNA binding"/>
    <property type="evidence" value="ECO:0007669"/>
    <property type="project" value="UniProtKB-KW"/>
</dbReference>
<dbReference type="GO" id="GO:0000981">
    <property type="term" value="F:DNA-binding transcription factor activity, RNA polymerase II-specific"/>
    <property type="evidence" value="ECO:0007669"/>
    <property type="project" value="InterPro"/>
</dbReference>
<dbReference type="GO" id="GO:0008270">
    <property type="term" value="F:zinc ion binding"/>
    <property type="evidence" value="ECO:0007669"/>
    <property type="project" value="InterPro"/>
</dbReference>
<dbReference type="GO" id="GO:0006351">
    <property type="term" value="P:DNA-templated transcription"/>
    <property type="evidence" value="ECO:0007669"/>
    <property type="project" value="InterPro"/>
</dbReference>
<dbReference type="GO" id="GO:0009062">
    <property type="term" value="P:fatty acid catabolic process"/>
    <property type="evidence" value="ECO:0000318"/>
    <property type="project" value="GO_Central"/>
</dbReference>
<dbReference type="GO" id="GO:0045944">
    <property type="term" value="P:positive regulation of transcription by RNA polymerase II"/>
    <property type="evidence" value="ECO:0000318"/>
    <property type="project" value="GO_Central"/>
</dbReference>
<dbReference type="CDD" id="cd12148">
    <property type="entry name" value="fungal_TF_MHR"/>
    <property type="match status" value="1"/>
</dbReference>
<dbReference type="CDD" id="cd00067">
    <property type="entry name" value="GAL4"/>
    <property type="match status" value="1"/>
</dbReference>
<dbReference type="Gene3D" id="4.10.240.10">
    <property type="entry name" value="Zn(2)-C6 fungal-type DNA-binding domain"/>
    <property type="match status" value="1"/>
</dbReference>
<dbReference type="InterPro" id="IPR052073">
    <property type="entry name" value="Amide_Lactam_Regulators"/>
</dbReference>
<dbReference type="InterPro" id="IPR007219">
    <property type="entry name" value="Transcription_factor_dom_fun"/>
</dbReference>
<dbReference type="InterPro" id="IPR036864">
    <property type="entry name" value="Zn2-C6_fun-type_DNA-bd_sf"/>
</dbReference>
<dbReference type="InterPro" id="IPR001138">
    <property type="entry name" value="Zn2Cys6_DnaBD"/>
</dbReference>
<dbReference type="PANTHER" id="PTHR47171:SF4">
    <property type="entry name" value="ACETAMIDASE REGULATORY PROTEIN"/>
    <property type="match status" value="1"/>
</dbReference>
<dbReference type="PANTHER" id="PTHR47171">
    <property type="entry name" value="FARA-RELATED"/>
    <property type="match status" value="1"/>
</dbReference>
<dbReference type="Pfam" id="PF04082">
    <property type="entry name" value="Fungal_trans"/>
    <property type="match status" value="1"/>
</dbReference>
<dbReference type="Pfam" id="PF00172">
    <property type="entry name" value="Zn_clus"/>
    <property type="match status" value="1"/>
</dbReference>
<dbReference type="SMART" id="SM00906">
    <property type="entry name" value="Fungal_trans"/>
    <property type="match status" value="1"/>
</dbReference>
<dbReference type="SMART" id="SM00066">
    <property type="entry name" value="GAL4"/>
    <property type="match status" value="1"/>
</dbReference>
<dbReference type="SUPFAM" id="SSF57701">
    <property type="entry name" value="Zn2/Cys6 DNA-binding domain"/>
    <property type="match status" value="1"/>
</dbReference>
<dbReference type="PROSITE" id="PS00463">
    <property type="entry name" value="ZN2_CY6_FUNGAL_1"/>
    <property type="match status" value="1"/>
</dbReference>
<dbReference type="PROSITE" id="PS50048">
    <property type="entry name" value="ZN2_CY6_FUNGAL_2"/>
    <property type="match status" value="1"/>
</dbReference>
<comment type="function">
    <text evidence="1">Positively regulates the expression of genes involved in the catabolism of certain amides, omega amino acids, and lactams.</text>
</comment>
<comment type="subcellular location">
    <subcellularLocation>
        <location evidence="2">Nucleus</location>
    </subcellularLocation>
</comment>
<reference key="1">
    <citation type="journal article" date="2005" name="Nature">
        <title>Genomic sequence of the pathogenic and allergenic filamentous fungus Aspergillus fumigatus.</title>
        <authorList>
            <person name="Nierman W.C."/>
            <person name="Pain A."/>
            <person name="Anderson M.J."/>
            <person name="Wortman J.R."/>
            <person name="Kim H.S."/>
            <person name="Arroyo J."/>
            <person name="Berriman M."/>
            <person name="Abe K."/>
            <person name="Archer D.B."/>
            <person name="Bermejo C."/>
            <person name="Bennett J.W."/>
            <person name="Bowyer P."/>
            <person name="Chen D."/>
            <person name="Collins M."/>
            <person name="Coulsen R."/>
            <person name="Davies R."/>
            <person name="Dyer P.S."/>
            <person name="Farman M.L."/>
            <person name="Fedorova N."/>
            <person name="Fedorova N.D."/>
            <person name="Feldblyum T.V."/>
            <person name="Fischer R."/>
            <person name="Fosker N."/>
            <person name="Fraser A."/>
            <person name="Garcia J.L."/>
            <person name="Garcia M.J."/>
            <person name="Goble A."/>
            <person name="Goldman G.H."/>
            <person name="Gomi K."/>
            <person name="Griffith-Jones S."/>
            <person name="Gwilliam R."/>
            <person name="Haas B.J."/>
            <person name="Haas H."/>
            <person name="Harris D.E."/>
            <person name="Horiuchi H."/>
            <person name="Huang J."/>
            <person name="Humphray S."/>
            <person name="Jimenez J."/>
            <person name="Keller N."/>
            <person name="Khouri H."/>
            <person name="Kitamoto K."/>
            <person name="Kobayashi T."/>
            <person name="Konzack S."/>
            <person name="Kulkarni R."/>
            <person name="Kumagai T."/>
            <person name="Lafton A."/>
            <person name="Latge J.-P."/>
            <person name="Li W."/>
            <person name="Lord A."/>
            <person name="Lu C."/>
            <person name="Majoros W.H."/>
            <person name="May G.S."/>
            <person name="Miller B.L."/>
            <person name="Mohamoud Y."/>
            <person name="Molina M."/>
            <person name="Monod M."/>
            <person name="Mouyna I."/>
            <person name="Mulligan S."/>
            <person name="Murphy L.D."/>
            <person name="O'Neil S."/>
            <person name="Paulsen I."/>
            <person name="Penalva M.A."/>
            <person name="Pertea M."/>
            <person name="Price C."/>
            <person name="Pritchard B.L."/>
            <person name="Quail M.A."/>
            <person name="Rabbinowitsch E."/>
            <person name="Rawlins N."/>
            <person name="Rajandream M.A."/>
            <person name="Reichard U."/>
            <person name="Renauld H."/>
            <person name="Robson G.D."/>
            <person name="Rodriguez de Cordoba S."/>
            <person name="Rodriguez-Pena J.M."/>
            <person name="Ronning C.M."/>
            <person name="Rutter S."/>
            <person name="Salzberg S.L."/>
            <person name="Sanchez M."/>
            <person name="Sanchez-Ferrero J.C."/>
            <person name="Saunders D."/>
            <person name="Seeger K."/>
            <person name="Squares R."/>
            <person name="Squares S."/>
            <person name="Takeuchi M."/>
            <person name="Tekaia F."/>
            <person name="Turner G."/>
            <person name="Vazquez de Aldana C.R."/>
            <person name="Weidman J."/>
            <person name="White O."/>
            <person name="Woodward J.R."/>
            <person name="Yu J.-H."/>
            <person name="Fraser C.M."/>
            <person name="Galagan J.E."/>
            <person name="Asai K."/>
            <person name="Machida M."/>
            <person name="Hall N."/>
            <person name="Barrell B.G."/>
            <person name="Denning D.W."/>
        </authorList>
    </citation>
    <scope>NUCLEOTIDE SEQUENCE [LARGE SCALE GENOMIC DNA]</scope>
    <source>
        <strain>ATCC MYA-4609 / CBS 101355 / FGSC A1100 / Af293</strain>
    </source>
</reference>
<organism>
    <name type="scientific">Aspergillus fumigatus (strain ATCC MYA-4609 / CBS 101355 / FGSC A1100 / Af293)</name>
    <name type="common">Neosartorya fumigata</name>
    <dbReference type="NCBI Taxonomy" id="330879"/>
    <lineage>
        <taxon>Eukaryota</taxon>
        <taxon>Fungi</taxon>
        <taxon>Dikarya</taxon>
        <taxon>Ascomycota</taxon>
        <taxon>Pezizomycotina</taxon>
        <taxon>Eurotiomycetes</taxon>
        <taxon>Eurotiomycetidae</taxon>
        <taxon>Eurotiales</taxon>
        <taxon>Aspergillaceae</taxon>
        <taxon>Aspergillus</taxon>
        <taxon>Aspergillus subgen. Fumigati</taxon>
    </lineage>
</organism>